<protein>
    <recommendedName>
        <fullName>Phosphatase NudJ</fullName>
        <ecNumber>3.6.1.-</ecNumber>
    </recommendedName>
</protein>
<keyword id="KW-0378">Hydrolase</keyword>
<keyword id="KW-0460">Magnesium</keyword>
<keyword id="KW-1185">Reference proteome</keyword>
<comment type="cofactor">
    <cofactor evidence="1">
        <name>Mg(2+)</name>
        <dbReference type="ChEBI" id="CHEBI:18420"/>
    </cofactor>
</comment>
<comment type="subunit">
    <text evidence="1">Monomer.</text>
</comment>
<comment type="similarity">
    <text evidence="3">Belongs to the Nudix hydrolase family. NudJ subfamily.</text>
</comment>
<proteinExistence type="inferred from homology"/>
<evidence type="ECO:0000250" key="1"/>
<evidence type="ECO:0000255" key="2">
    <source>
        <dbReference type="PROSITE-ProRule" id="PRU00794"/>
    </source>
</evidence>
<evidence type="ECO:0000305" key="3"/>
<organism>
    <name type="scientific">Shigella flexneri</name>
    <dbReference type="NCBI Taxonomy" id="623"/>
    <lineage>
        <taxon>Bacteria</taxon>
        <taxon>Pseudomonadati</taxon>
        <taxon>Pseudomonadota</taxon>
        <taxon>Gammaproteobacteria</taxon>
        <taxon>Enterobacterales</taxon>
        <taxon>Enterobacteriaceae</taxon>
        <taxon>Shigella</taxon>
    </lineage>
</organism>
<name>NUDJ_SHIFL</name>
<feature type="chain" id="PRO_0000057072" description="Phosphatase NudJ">
    <location>
        <begin position="1"/>
        <end position="153"/>
    </location>
</feature>
<feature type="domain" description="Nudix hydrolase" evidence="2">
    <location>
        <begin position="3"/>
        <end position="131"/>
    </location>
</feature>
<feature type="short sequence motif" description="Nudix box">
    <location>
        <begin position="36"/>
        <end position="57"/>
    </location>
</feature>
<reference key="1">
    <citation type="journal article" date="2002" name="Nucleic Acids Res.">
        <title>Genome sequence of Shigella flexneri 2a: insights into pathogenicity through comparison with genomes of Escherichia coli K12 and O157.</title>
        <authorList>
            <person name="Jin Q."/>
            <person name="Yuan Z."/>
            <person name="Xu J."/>
            <person name="Wang Y."/>
            <person name="Shen Y."/>
            <person name="Lu W."/>
            <person name="Wang J."/>
            <person name="Liu H."/>
            <person name="Yang J."/>
            <person name="Yang F."/>
            <person name="Zhang X."/>
            <person name="Zhang J."/>
            <person name="Yang G."/>
            <person name="Wu H."/>
            <person name="Qu D."/>
            <person name="Dong J."/>
            <person name="Sun L."/>
            <person name="Xue Y."/>
            <person name="Zhao A."/>
            <person name="Gao Y."/>
            <person name="Zhu J."/>
            <person name="Kan B."/>
            <person name="Ding K."/>
            <person name="Chen S."/>
            <person name="Cheng H."/>
            <person name="Yao Z."/>
            <person name="He B."/>
            <person name="Chen R."/>
            <person name="Ma D."/>
            <person name="Qiang B."/>
            <person name="Wen Y."/>
            <person name="Hou Y."/>
            <person name="Yu J."/>
        </authorList>
    </citation>
    <scope>NUCLEOTIDE SEQUENCE [LARGE SCALE GENOMIC DNA]</scope>
    <source>
        <strain>301 / Serotype 2a</strain>
    </source>
</reference>
<reference key="2">
    <citation type="journal article" date="2003" name="Infect. Immun.">
        <title>Complete genome sequence and comparative genomics of Shigella flexneri serotype 2a strain 2457T.</title>
        <authorList>
            <person name="Wei J."/>
            <person name="Goldberg M.B."/>
            <person name="Burland V."/>
            <person name="Venkatesan M.M."/>
            <person name="Deng W."/>
            <person name="Fournier G."/>
            <person name="Mayhew G.F."/>
            <person name="Plunkett G. III"/>
            <person name="Rose D.J."/>
            <person name="Darling A."/>
            <person name="Mau B."/>
            <person name="Perna N.T."/>
            <person name="Payne S.M."/>
            <person name="Runyen-Janecky L.J."/>
            <person name="Zhou S."/>
            <person name="Schwartz D.C."/>
            <person name="Blattner F.R."/>
        </authorList>
    </citation>
    <scope>NUCLEOTIDE SEQUENCE [LARGE SCALE GENOMIC DNA]</scope>
    <source>
        <strain>ATCC 700930 / 2457T / Serotype 2a</strain>
    </source>
</reference>
<gene>
    <name type="primary">nudJ</name>
    <name type="ordered locus">SF1153</name>
    <name type="ordered locus">S1236</name>
</gene>
<accession>P0AEI9</accession>
<accession>P75965</accession>
<sequence length="153" mass="17433">MFKPHVTVACVVHAEGKFLVVEETINGKALWNQPAGHLEADETLVEAAARELWEETGISAQPQHFIRMHQWIAPDKTPFLRFLFAIELEQICPTQPHDSDIDCCRWVSAEEILQASNLRSPLVAESIRCYQSGQRYPLEMIGDFNWPFTKGVI</sequence>
<dbReference type="EC" id="3.6.1.-"/>
<dbReference type="EMBL" id="AE005674">
    <property type="protein sequence ID" value="AAN42770.1"/>
    <property type="molecule type" value="Genomic_DNA"/>
</dbReference>
<dbReference type="EMBL" id="AE014073">
    <property type="protein sequence ID" value="AAP16659.1"/>
    <property type="molecule type" value="Genomic_DNA"/>
</dbReference>
<dbReference type="RefSeq" id="NP_707063.1">
    <property type="nucleotide sequence ID" value="NC_004337.2"/>
</dbReference>
<dbReference type="RefSeq" id="WP_000476093.1">
    <property type="nucleotide sequence ID" value="NZ_WPGW01000001.1"/>
</dbReference>
<dbReference type="SMR" id="P0AEI9"/>
<dbReference type="STRING" id="198214.SF1153"/>
<dbReference type="PaxDb" id="198214-SF1153"/>
<dbReference type="GeneID" id="1026275"/>
<dbReference type="GeneID" id="75203720"/>
<dbReference type="KEGG" id="sfl:SF1153"/>
<dbReference type="KEGG" id="sfx:S1236"/>
<dbReference type="PATRIC" id="fig|198214.7.peg.1354"/>
<dbReference type="HOGENOM" id="CLU_037162_6_1_6"/>
<dbReference type="Proteomes" id="UP000001006">
    <property type="component" value="Chromosome"/>
</dbReference>
<dbReference type="Proteomes" id="UP000002673">
    <property type="component" value="Chromosome"/>
</dbReference>
<dbReference type="GO" id="GO:0017110">
    <property type="term" value="F:nucleoside diphosphate phosphatase activity"/>
    <property type="evidence" value="ECO:0007669"/>
    <property type="project" value="InterPro"/>
</dbReference>
<dbReference type="GO" id="GO:0017111">
    <property type="term" value="F:ribonucleoside triphosphate phosphatase activity"/>
    <property type="evidence" value="ECO:0007669"/>
    <property type="project" value="InterPro"/>
</dbReference>
<dbReference type="GO" id="GO:0004787">
    <property type="term" value="F:thiamine diphosphate phosphatase activity"/>
    <property type="evidence" value="ECO:0007669"/>
    <property type="project" value="InterPro"/>
</dbReference>
<dbReference type="CDD" id="cd03675">
    <property type="entry name" value="NUDIX_Hydrolase"/>
    <property type="match status" value="1"/>
</dbReference>
<dbReference type="FunFam" id="3.90.79.10:FF:000017">
    <property type="entry name" value="Phosphatase NudJ"/>
    <property type="match status" value="1"/>
</dbReference>
<dbReference type="Gene3D" id="3.90.79.10">
    <property type="entry name" value="Nucleoside Triphosphate Pyrophosphohydrolase"/>
    <property type="match status" value="1"/>
</dbReference>
<dbReference type="InterPro" id="IPR020476">
    <property type="entry name" value="Nudix_hydrolase"/>
</dbReference>
<dbReference type="InterPro" id="IPR015797">
    <property type="entry name" value="NUDIX_hydrolase-like_dom_sf"/>
</dbReference>
<dbReference type="InterPro" id="IPR020084">
    <property type="entry name" value="NUDIX_hydrolase_CS"/>
</dbReference>
<dbReference type="InterPro" id="IPR000086">
    <property type="entry name" value="NUDIX_hydrolase_dom"/>
</dbReference>
<dbReference type="InterPro" id="IPR033713">
    <property type="entry name" value="NudJ"/>
</dbReference>
<dbReference type="PANTHER" id="PTHR43222">
    <property type="entry name" value="NUDIX HYDROLASE 23"/>
    <property type="match status" value="1"/>
</dbReference>
<dbReference type="PANTHER" id="PTHR43222:SF11">
    <property type="entry name" value="PHOSPHATASE NUDJ"/>
    <property type="match status" value="1"/>
</dbReference>
<dbReference type="Pfam" id="PF00293">
    <property type="entry name" value="NUDIX"/>
    <property type="match status" value="1"/>
</dbReference>
<dbReference type="PRINTS" id="PR00502">
    <property type="entry name" value="NUDIXFAMILY"/>
</dbReference>
<dbReference type="SUPFAM" id="SSF55811">
    <property type="entry name" value="Nudix"/>
    <property type="match status" value="1"/>
</dbReference>
<dbReference type="PROSITE" id="PS51462">
    <property type="entry name" value="NUDIX"/>
    <property type="match status" value="1"/>
</dbReference>
<dbReference type="PROSITE" id="PS00893">
    <property type="entry name" value="NUDIX_BOX"/>
    <property type="match status" value="1"/>
</dbReference>